<organism>
    <name type="scientific">Tolumonas auensis (strain DSM 9187 / NBRC 110442 / TA 4)</name>
    <dbReference type="NCBI Taxonomy" id="595494"/>
    <lineage>
        <taxon>Bacteria</taxon>
        <taxon>Pseudomonadati</taxon>
        <taxon>Pseudomonadota</taxon>
        <taxon>Gammaproteobacteria</taxon>
        <taxon>Aeromonadales</taxon>
        <taxon>Aeromonadaceae</taxon>
        <taxon>Tolumonas</taxon>
    </lineage>
</organism>
<comment type="function">
    <text evidence="1">Bidirectionally degrades single-stranded DNA into large acid-insoluble oligonucleotides, which are then degraded further into small acid-soluble oligonucleotides.</text>
</comment>
<comment type="catalytic activity">
    <reaction evidence="1">
        <text>Exonucleolytic cleavage in either 5'- to 3'- or 3'- to 5'-direction to yield nucleoside 5'-phosphates.</text>
        <dbReference type="EC" id="3.1.11.6"/>
    </reaction>
</comment>
<comment type="subunit">
    <text evidence="1">Heterooligomer composed of large and small subunits.</text>
</comment>
<comment type="subcellular location">
    <subcellularLocation>
        <location evidence="1">Cytoplasm</location>
    </subcellularLocation>
</comment>
<comment type="similarity">
    <text evidence="1">Belongs to the XseB family.</text>
</comment>
<keyword id="KW-0963">Cytoplasm</keyword>
<keyword id="KW-0269">Exonuclease</keyword>
<keyword id="KW-0378">Hydrolase</keyword>
<keyword id="KW-0540">Nuclease</keyword>
<keyword id="KW-1185">Reference proteome</keyword>
<reference key="1">
    <citation type="submission" date="2009-05" db="EMBL/GenBank/DDBJ databases">
        <title>Complete sequence of Tolumonas auensis DSM 9187.</title>
        <authorList>
            <consortium name="US DOE Joint Genome Institute"/>
            <person name="Lucas S."/>
            <person name="Copeland A."/>
            <person name="Lapidus A."/>
            <person name="Glavina del Rio T."/>
            <person name="Tice H."/>
            <person name="Bruce D."/>
            <person name="Goodwin L."/>
            <person name="Pitluck S."/>
            <person name="Chertkov O."/>
            <person name="Brettin T."/>
            <person name="Detter J.C."/>
            <person name="Han C."/>
            <person name="Larimer F."/>
            <person name="Land M."/>
            <person name="Hauser L."/>
            <person name="Kyrpides N."/>
            <person name="Mikhailova N."/>
            <person name="Spring S."/>
            <person name="Beller H."/>
        </authorList>
    </citation>
    <scope>NUCLEOTIDE SEQUENCE [LARGE SCALE GENOMIC DNA]</scope>
    <source>
        <strain>DSM 9187 / NBRC 110442 / TA 4</strain>
    </source>
</reference>
<sequence length="88" mass="9870">MAAKKTESLSFDAALGELEQIVQQLEQGDLPLETALKQFERGIQLARVSKQKLEQAEQQVQILLQQGEQEKLTPFTVEQTSGQNAEEE</sequence>
<name>EX7S_TOLAT</name>
<feature type="chain" id="PRO_1000205236" description="Exodeoxyribonuclease 7 small subunit">
    <location>
        <begin position="1"/>
        <end position="88"/>
    </location>
</feature>
<evidence type="ECO:0000255" key="1">
    <source>
        <dbReference type="HAMAP-Rule" id="MF_00337"/>
    </source>
</evidence>
<proteinExistence type="inferred from homology"/>
<dbReference type="EC" id="3.1.11.6" evidence="1"/>
<dbReference type="EMBL" id="CP001616">
    <property type="protein sequence ID" value="ACQ94097.1"/>
    <property type="molecule type" value="Genomic_DNA"/>
</dbReference>
<dbReference type="RefSeq" id="WP_015879546.1">
    <property type="nucleotide sequence ID" value="NC_012691.1"/>
</dbReference>
<dbReference type="SMR" id="C4LAC2"/>
<dbReference type="STRING" id="595494.Tola_2503"/>
<dbReference type="KEGG" id="tau:Tola_2503"/>
<dbReference type="eggNOG" id="COG1722">
    <property type="taxonomic scope" value="Bacteria"/>
</dbReference>
<dbReference type="HOGENOM" id="CLU_145918_3_3_6"/>
<dbReference type="OrthoDB" id="5591562at2"/>
<dbReference type="Proteomes" id="UP000009073">
    <property type="component" value="Chromosome"/>
</dbReference>
<dbReference type="GO" id="GO:0005829">
    <property type="term" value="C:cytosol"/>
    <property type="evidence" value="ECO:0007669"/>
    <property type="project" value="TreeGrafter"/>
</dbReference>
<dbReference type="GO" id="GO:0009318">
    <property type="term" value="C:exodeoxyribonuclease VII complex"/>
    <property type="evidence" value="ECO:0007669"/>
    <property type="project" value="InterPro"/>
</dbReference>
<dbReference type="GO" id="GO:0008855">
    <property type="term" value="F:exodeoxyribonuclease VII activity"/>
    <property type="evidence" value="ECO:0007669"/>
    <property type="project" value="UniProtKB-UniRule"/>
</dbReference>
<dbReference type="GO" id="GO:0006308">
    <property type="term" value="P:DNA catabolic process"/>
    <property type="evidence" value="ECO:0007669"/>
    <property type="project" value="UniProtKB-UniRule"/>
</dbReference>
<dbReference type="Gene3D" id="1.10.287.1040">
    <property type="entry name" value="Exonuclease VII, small subunit"/>
    <property type="match status" value="1"/>
</dbReference>
<dbReference type="HAMAP" id="MF_00337">
    <property type="entry name" value="Exonuc_7_S"/>
    <property type="match status" value="1"/>
</dbReference>
<dbReference type="InterPro" id="IPR003761">
    <property type="entry name" value="Exonuc_VII_S"/>
</dbReference>
<dbReference type="InterPro" id="IPR037004">
    <property type="entry name" value="Exonuc_VII_ssu_sf"/>
</dbReference>
<dbReference type="NCBIfam" id="NF002137">
    <property type="entry name" value="PRK00977.1-1"/>
    <property type="match status" value="1"/>
</dbReference>
<dbReference type="NCBIfam" id="NF002140">
    <property type="entry name" value="PRK00977.1-4"/>
    <property type="match status" value="1"/>
</dbReference>
<dbReference type="NCBIfam" id="TIGR01280">
    <property type="entry name" value="xseB"/>
    <property type="match status" value="1"/>
</dbReference>
<dbReference type="PANTHER" id="PTHR34137">
    <property type="entry name" value="EXODEOXYRIBONUCLEASE 7 SMALL SUBUNIT"/>
    <property type="match status" value="1"/>
</dbReference>
<dbReference type="PANTHER" id="PTHR34137:SF1">
    <property type="entry name" value="EXODEOXYRIBONUCLEASE 7 SMALL SUBUNIT"/>
    <property type="match status" value="1"/>
</dbReference>
<dbReference type="Pfam" id="PF02609">
    <property type="entry name" value="Exonuc_VII_S"/>
    <property type="match status" value="1"/>
</dbReference>
<dbReference type="SUPFAM" id="SSF116842">
    <property type="entry name" value="XseB-like"/>
    <property type="match status" value="1"/>
</dbReference>
<protein>
    <recommendedName>
        <fullName evidence="1">Exodeoxyribonuclease 7 small subunit</fullName>
        <ecNumber evidence="1">3.1.11.6</ecNumber>
    </recommendedName>
    <alternativeName>
        <fullName evidence="1">Exodeoxyribonuclease VII small subunit</fullName>
        <shortName evidence="1">Exonuclease VII small subunit</shortName>
    </alternativeName>
</protein>
<gene>
    <name evidence="1" type="primary">xseB</name>
    <name type="ordered locus">Tola_2503</name>
</gene>
<accession>C4LAC2</accession>